<name>G3PA_GUITH</name>
<sequence length="386" mass="41426">MAYFKAVAYLAALASAAAFNPGSSFVPRLNAPATQPKAAKMTGPTMQAVPCGINGFGRIGRLVARIMIKDPETKLLQVNAGSATPDYMAYQFKYDSIHGRYQGDVVVDGDDLVIDGQRVITTRARDPKDIGWAKTGVEYLCESTGVFLTAEKAQPHIDAGVKKVIFSAPAKDDSLTVVMGVNAEDYKGQTDFISCASCTTNGLAPLVKCINDKWGIEEGLMTTIHAMTATQAVVDSSSRKDWRGGRAASGNIIPSSTGAAKAVAKVIPAVKGKLTGMAFRVPTIDVSVVDLTCRLAKDATYEEICAEVKRRANGDMKGFLGYTDEPLVSTDFETEPISSTFDAEAGISLNPRFVKLVAWYDNEWGYSNRVKDLMVHVAKVDAKVKA</sequence>
<protein>
    <recommendedName>
        <fullName>Glyceraldehyde-3-phosphate dehydrogenase, chloroplastic</fullName>
        <ecNumber>1.2.1.59</ecNumber>
    </recommendedName>
    <alternativeName>
        <fullName>NAD(P)-dependent glyceraldehyde-3-phosphate dehydrogenase</fullName>
    </alternativeName>
</protein>
<evidence type="ECO:0000250" key="1"/>
<evidence type="ECO:0000255" key="2">
    <source>
        <dbReference type="PROSITE-ProRule" id="PRU10009"/>
    </source>
</evidence>
<evidence type="ECO:0000305" key="3"/>
<feature type="transit peptide" description="Chloroplast" evidence="1">
    <location>
        <begin position="1"/>
        <end position="45"/>
    </location>
</feature>
<feature type="chain" id="PRO_0000010421" description="Glyceraldehyde-3-phosphate dehydrogenase, chloroplastic">
    <location>
        <begin position="46"/>
        <end position="386"/>
    </location>
</feature>
<feature type="active site" description="Nucleophile" evidence="2">
    <location>
        <position position="198"/>
    </location>
</feature>
<feature type="binding site" evidence="1">
    <location>
        <begin position="58"/>
        <end position="59"/>
    </location>
    <ligand>
        <name>NADP(+)</name>
        <dbReference type="ChEBI" id="CHEBI:58349"/>
    </ligand>
</feature>
<feature type="binding site" evidence="1">
    <location>
        <position position="125"/>
    </location>
    <ligand>
        <name>NADP(+)</name>
        <dbReference type="ChEBI" id="CHEBI:58349"/>
    </ligand>
</feature>
<feature type="binding site" evidence="1">
    <location>
        <begin position="197"/>
        <end position="199"/>
    </location>
    <ligand>
        <name>D-glyceraldehyde 3-phosphate</name>
        <dbReference type="ChEBI" id="CHEBI:59776"/>
    </ligand>
</feature>
<feature type="binding site" evidence="1">
    <location>
        <position position="228"/>
    </location>
    <ligand>
        <name>D-glyceraldehyde 3-phosphate</name>
        <dbReference type="ChEBI" id="CHEBI:59776"/>
    </ligand>
</feature>
<feature type="binding site" evidence="1">
    <location>
        <begin position="257"/>
        <end position="258"/>
    </location>
    <ligand>
        <name>D-glyceraldehyde 3-phosphate</name>
        <dbReference type="ChEBI" id="CHEBI:59776"/>
    </ligand>
</feature>
<feature type="binding site" evidence="1">
    <location>
        <position position="280"/>
    </location>
    <ligand>
        <name>D-glyceraldehyde 3-phosphate</name>
        <dbReference type="ChEBI" id="CHEBI:59776"/>
    </ligand>
</feature>
<feature type="binding site" evidence="1">
    <location>
        <position position="362"/>
    </location>
    <ligand>
        <name>NADP(+)</name>
        <dbReference type="ChEBI" id="CHEBI:58349"/>
    </ligand>
</feature>
<feature type="site" description="Activates thiol group during catalysis" evidence="1">
    <location>
        <position position="225"/>
    </location>
</feature>
<dbReference type="EC" id="1.2.1.59"/>
<dbReference type="EMBL" id="U40032">
    <property type="protein sequence ID" value="AAC49702.1"/>
    <property type="molecule type" value="mRNA"/>
</dbReference>
<dbReference type="SMR" id="O09452"/>
<dbReference type="UniPathway" id="UPA00116"/>
<dbReference type="GO" id="GO:0009507">
    <property type="term" value="C:chloroplast"/>
    <property type="evidence" value="ECO:0007669"/>
    <property type="project" value="UniProtKB-SubCell"/>
</dbReference>
<dbReference type="GO" id="GO:0005829">
    <property type="term" value="C:cytosol"/>
    <property type="evidence" value="ECO:0007669"/>
    <property type="project" value="TreeGrafter"/>
</dbReference>
<dbReference type="GO" id="GO:0004365">
    <property type="term" value="F:glyceraldehyde-3-phosphate dehydrogenase (NAD+) (phosphorylating) activity"/>
    <property type="evidence" value="ECO:0007669"/>
    <property type="project" value="RHEA"/>
</dbReference>
<dbReference type="GO" id="GO:0047100">
    <property type="term" value="F:glyceraldehyde-3-phosphate dehydrogenase (NADP+) (phosphorylating) activity"/>
    <property type="evidence" value="ECO:0007669"/>
    <property type="project" value="RHEA"/>
</dbReference>
<dbReference type="GO" id="GO:0051287">
    <property type="term" value="F:NAD binding"/>
    <property type="evidence" value="ECO:0007669"/>
    <property type="project" value="InterPro"/>
</dbReference>
<dbReference type="GO" id="GO:0050661">
    <property type="term" value="F:NADP binding"/>
    <property type="evidence" value="ECO:0007669"/>
    <property type="project" value="InterPro"/>
</dbReference>
<dbReference type="GO" id="GO:0006006">
    <property type="term" value="P:glucose metabolic process"/>
    <property type="evidence" value="ECO:0007669"/>
    <property type="project" value="InterPro"/>
</dbReference>
<dbReference type="GO" id="GO:0006096">
    <property type="term" value="P:glycolytic process"/>
    <property type="evidence" value="ECO:0007669"/>
    <property type="project" value="TreeGrafter"/>
</dbReference>
<dbReference type="GO" id="GO:0019253">
    <property type="term" value="P:reductive pentose-phosphate cycle"/>
    <property type="evidence" value="ECO:0007669"/>
    <property type="project" value="UniProtKB-UniPathway"/>
</dbReference>
<dbReference type="CDD" id="cd18126">
    <property type="entry name" value="GAPDH_I_C"/>
    <property type="match status" value="1"/>
</dbReference>
<dbReference type="CDD" id="cd05214">
    <property type="entry name" value="GAPDH_I_N"/>
    <property type="match status" value="1"/>
</dbReference>
<dbReference type="FunFam" id="3.30.360.10:FF:000001">
    <property type="entry name" value="Glyceraldehyde-3-phosphate dehydrogenase"/>
    <property type="match status" value="1"/>
</dbReference>
<dbReference type="FunFam" id="3.40.50.720:FF:000001">
    <property type="entry name" value="Glyceraldehyde-3-phosphate dehydrogenase"/>
    <property type="match status" value="1"/>
</dbReference>
<dbReference type="Gene3D" id="3.30.360.10">
    <property type="entry name" value="Dihydrodipicolinate Reductase, domain 2"/>
    <property type="match status" value="1"/>
</dbReference>
<dbReference type="Gene3D" id="3.40.50.720">
    <property type="entry name" value="NAD(P)-binding Rossmann-like Domain"/>
    <property type="match status" value="1"/>
</dbReference>
<dbReference type="InterPro" id="IPR020831">
    <property type="entry name" value="GlycerAld/Erythrose_P_DH"/>
</dbReference>
<dbReference type="InterPro" id="IPR020830">
    <property type="entry name" value="GlycerAld_3-P_DH_AS"/>
</dbReference>
<dbReference type="InterPro" id="IPR020829">
    <property type="entry name" value="GlycerAld_3-P_DH_cat"/>
</dbReference>
<dbReference type="InterPro" id="IPR020828">
    <property type="entry name" value="GlycerAld_3-P_DH_NAD(P)-bd"/>
</dbReference>
<dbReference type="InterPro" id="IPR006424">
    <property type="entry name" value="Glyceraldehyde-3-P_DH_1"/>
</dbReference>
<dbReference type="InterPro" id="IPR036291">
    <property type="entry name" value="NAD(P)-bd_dom_sf"/>
</dbReference>
<dbReference type="NCBIfam" id="TIGR01534">
    <property type="entry name" value="GAPDH-I"/>
    <property type="match status" value="1"/>
</dbReference>
<dbReference type="PANTHER" id="PTHR10836">
    <property type="entry name" value="GLYCERALDEHYDE 3-PHOSPHATE DEHYDROGENASE"/>
    <property type="match status" value="1"/>
</dbReference>
<dbReference type="PANTHER" id="PTHR10836:SF76">
    <property type="entry name" value="GLYCERALDEHYDE-3-PHOSPHATE DEHYDROGENASE-RELATED"/>
    <property type="match status" value="1"/>
</dbReference>
<dbReference type="Pfam" id="PF02800">
    <property type="entry name" value="Gp_dh_C"/>
    <property type="match status" value="1"/>
</dbReference>
<dbReference type="Pfam" id="PF00044">
    <property type="entry name" value="Gp_dh_N"/>
    <property type="match status" value="1"/>
</dbReference>
<dbReference type="PIRSF" id="PIRSF000149">
    <property type="entry name" value="GAP_DH"/>
    <property type="match status" value="1"/>
</dbReference>
<dbReference type="PRINTS" id="PR00078">
    <property type="entry name" value="G3PDHDRGNASE"/>
</dbReference>
<dbReference type="SMART" id="SM00846">
    <property type="entry name" value="Gp_dh_N"/>
    <property type="match status" value="1"/>
</dbReference>
<dbReference type="SUPFAM" id="SSF55347">
    <property type="entry name" value="Glyceraldehyde-3-phosphate dehydrogenase-like, C-terminal domain"/>
    <property type="match status" value="1"/>
</dbReference>
<dbReference type="SUPFAM" id="SSF51735">
    <property type="entry name" value="NAD(P)-binding Rossmann-fold domains"/>
    <property type="match status" value="1"/>
</dbReference>
<dbReference type="PROSITE" id="PS00071">
    <property type="entry name" value="GAPDH"/>
    <property type="match status" value="1"/>
</dbReference>
<proteinExistence type="evidence at transcript level"/>
<comment type="catalytic activity">
    <reaction>
        <text>D-glyceraldehyde 3-phosphate + phosphate + NADP(+) = (2R)-3-phospho-glyceroyl phosphate + NADPH + H(+)</text>
        <dbReference type="Rhea" id="RHEA:10296"/>
        <dbReference type="ChEBI" id="CHEBI:15378"/>
        <dbReference type="ChEBI" id="CHEBI:43474"/>
        <dbReference type="ChEBI" id="CHEBI:57604"/>
        <dbReference type="ChEBI" id="CHEBI:57783"/>
        <dbReference type="ChEBI" id="CHEBI:58349"/>
        <dbReference type="ChEBI" id="CHEBI:59776"/>
        <dbReference type="EC" id="1.2.1.59"/>
    </reaction>
</comment>
<comment type="catalytic activity">
    <reaction>
        <text>D-glyceraldehyde 3-phosphate + phosphate + NAD(+) = (2R)-3-phospho-glyceroyl phosphate + NADH + H(+)</text>
        <dbReference type="Rhea" id="RHEA:10300"/>
        <dbReference type="ChEBI" id="CHEBI:15378"/>
        <dbReference type="ChEBI" id="CHEBI:43474"/>
        <dbReference type="ChEBI" id="CHEBI:57540"/>
        <dbReference type="ChEBI" id="CHEBI:57604"/>
        <dbReference type="ChEBI" id="CHEBI:57945"/>
        <dbReference type="ChEBI" id="CHEBI:59776"/>
        <dbReference type="EC" id="1.2.1.59"/>
    </reaction>
</comment>
<comment type="pathway">
    <text>Carbohydrate biosynthesis; Calvin cycle.</text>
</comment>
<comment type="subunit">
    <text evidence="1">Homotetramer.</text>
</comment>
<comment type="subcellular location">
    <subcellularLocation>
        <location>Plastid</location>
        <location>Chloroplast</location>
    </subcellularLocation>
</comment>
<comment type="similarity">
    <text evidence="3">Belongs to the glyceraldehyde-3-phosphate dehydrogenase family.</text>
</comment>
<reference key="1">
    <citation type="journal article" date="1997" name="J. Mol. Evol.">
        <title>Evolutionary origin of cryptomonad microalgae: two novel chloroplast/cytosol-specific GAPDH genes as potential markers of ancestral endosymbiont and host cell components.</title>
        <authorList>
            <person name="Liaud M.-F."/>
            <person name="Brandt U."/>
            <person name="Scherzinger M."/>
            <person name="Cerff R."/>
        </authorList>
    </citation>
    <scope>NUCLEOTIDE SEQUENCE [MRNA]</scope>
</reference>
<accession>O09452</accession>
<organism>
    <name type="scientific">Guillardia theta</name>
    <name type="common">Cryptophyte</name>
    <name type="synonym">Cryptomonas phi</name>
    <dbReference type="NCBI Taxonomy" id="55529"/>
    <lineage>
        <taxon>Eukaryota</taxon>
        <taxon>Cryptophyceae</taxon>
        <taxon>Pyrenomonadales</taxon>
        <taxon>Geminigeraceae</taxon>
        <taxon>Guillardia</taxon>
    </lineage>
</organism>
<gene>
    <name type="primary">GAPC1</name>
</gene>
<keyword id="KW-0113">Calvin cycle</keyword>
<keyword id="KW-0150">Chloroplast</keyword>
<keyword id="KW-0520">NAD</keyword>
<keyword id="KW-0521">NADP</keyword>
<keyword id="KW-0560">Oxidoreductase</keyword>
<keyword id="KW-0934">Plastid</keyword>
<keyword id="KW-0809">Transit peptide</keyword>